<keyword id="KW-0067">ATP-binding</keyword>
<keyword id="KW-0520">NAD</keyword>
<keyword id="KW-0547">Nucleotide-binding</keyword>
<keyword id="KW-0548">Nucleotidyltransferase</keyword>
<keyword id="KW-0662">Pyridine nucleotide biosynthesis</keyword>
<keyword id="KW-0808">Transferase</keyword>
<evidence type="ECO:0000255" key="1">
    <source>
        <dbReference type="HAMAP-Rule" id="MF_00244"/>
    </source>
</evidence>
<gene>
    <name evidence="1" type="primary">nadD</name>
    <name type="ordered locus">CLL_A0583</name>
</gene>
<proteinExistence type="inferred from homology"/>
<accession>B2TKI3</accession>
<feature type="chain" id="PRO_1000100770" description="Probable nicotinate-nucleotide adenylyltransferase">
    <location>
        <begin position="1"/>
        <end position="200"/>
    </location>
</feature>
<sequence length="200" mass="23341">MKRYGIIGGTFDPIHYGHLYIAYEAKKQLNLDNVIFMPAGNPPHKEGKKVTDSLLRYKMVKKAIEDFSGFSISDYEIDKKGFSYTYETLEHFKNNDVELFFITGADCLMDIETWERADTILSLCNLVVFSRGGFSNKNLIKQKEYIEKKYSVNIIVLPLKRLEISSTDIRKRINNKERVDFFVPRSIIKLIEENSLYKEE</sequence>
<dbReference type="EC" id="2.7.7.18" evidence="1"/>
<dbReference type="EMBL" id="CP001056">
    <property type="protein sequence ID" value="ACD22384.1"/>
    <property type="molecule type" value="Genomic_DNA"/>
</dbReference>
<dbReference type="SMR" id="B2TKI3"/>
<dbReference type="KEGG" id="cbk:CLL_A0583"/>
<dbReference type="PATRIC" id="fig|935198.13.peg.529"/>
<dbReference type="HOGENOM" id="CLU_069765_0_1_9"/>
<dbReference type="UniPathway" id="UPA00253">
    <property type="reaction ID" value="UER00332"/>
</dbReference>
<dbReference type="Proteomes" id="UP000001195">
    <property type="component" value="Chromosome"/>
</dbReference>
<dbReference type="GO" id="GO:0005524">
    <property type="term" value="F:ATP binding"/>
    <property type="evidence" value="ECO:0007669"/>
    <property type="project" value="UniProtKB-KW"/>
</dbReference>
<dbReference type="GO" id="GO:0004515">
    <property type="term" value="F:nicotinate-nucleotide adenylyltransferase activity"/>
    <property type="evidence" value="ECO:0007669"/>
    <property type="project" value="UniProtKB-UniRule"/>
</dbReference>
<dbReference type="GO" id="GO:0009435">
    <property type="term" value="P:NAD biosynthetic process"/>
    <property type="evidence" value="ECO:0007669"/>
    <property type="project" value="UniProtKB-UniRule"/>
</dbReference>
<dbReference type="CDD" id="cd02165">
    <property type="entry name" value="NMNAT"/>
    <property type="match status" value="1"/>
</dbReference>
<dbReference type="Gene3D" id="3.40.50.620">
    <property type="entry name" value="HUPs"/>
    <property type="match status" value="1"/>
</dbReference>
<dbReference type="HAMAP" id="MF_00244">
    <property type="entry name" value="NaMN_adenylyltr"/>
    <property type="match status" value="1"/>
</dbReference>
<dbReference type="InterPro" id="IPR004821">
    <property type="entry name" value="Cyt_trans-like"/>
</dbReference>
<dbReference type="InterPro" id="IPR005248">
    <property type="entry name" value="NadD/NMNAT"/>
</dbReference>
<dbReference type="InterPro" id="IPR014729">
    <property type="entry name" value="Rossmann-like_a/b/a_fold"/>
</dbReference>
<dbReference type="NCBIfam" id="TIGR00125">
    <property type="entry name" value="cyt_tran_rel"/>
    <property type="match status" value="1"/>
</dbReference>
<dbReference type="NCBIfam" id="TIGR00482">
    <property type="entry name" value="nicotinate (nicotinamide) nucleotide adenylyltransferase"/>
    <property type="match status" value="1"/>
</dbReference>
<dbReference type="NCBIfam" id="NF000840">
    <property type="entry name" value="PRK00071.1-3"/>
    <property type="match status" value="1"/>
</dbReference>
<dbReference type="PANTHER" id="PTHR39321">
    <property type="entry name" value="NICOTINATE-NUCLEOTIDE ADENYLYLTRANSFERASE-RELATED"/>
    <property type="match status" value="1"/>
</dbReference>
<dbReference type="PANTHER" id="PTHR39321:SF3">
    <property type="entry name" value="PHOSPHOPANTETHEINE ADENYLYLTRANSFERASE"/>
    <property type="match status" value="1"/>
</dbReference>
<dbReference type="Pfam" id="PF01467">
    <property type="entry name" value="CTP_transf_like"/>
    <property type="match status" value="1"/>
</dbReference>
<dbReference type="SUPFAM" id="SSF52374">
    <property type="entry name" value="Nucleotidylyl transferase"/>
    <property type="match status" value="1"/>
</dbReference>
<reference key="1">
    <citation type="submission" date="2008-04" db="EMBL/GenBank/DDBJ databases">
        <title>Complete sequence of Clostridium botulinum strain Eklund.</title>
        <authorList>
            <person name="Brinkac L.M."/>
            <person name="Brown J.L."/>
            <person name="Bruce D."/>
            <person name="Detter C."/>
            <person name="Munk C."/>
            <person name="Smith L.A."/>
            <person name="Smith T.J."/>
            <person name="Sutton G."/>
            <person name="Brettin T.S."/>
        </authorList>
    </citation>
    <scope>NUCLEOTIDE SEQUENCE [LARGE SCALE GENOMIC DNA]</scope>
    <source>
        <strain>Eklund 17B / Type B</strain>
    </source>
</reference>
<name>NADD_CLOBB</name>
<organism>
    <name type="scientific">Clostridium botulinum (strain Eklund 17B / Type B)</name>
    <dbReference type="NCBI Taxonomy" id="935198"/>
    <lineage>
        <taxon>Bacteria</taxon>
        <taxon>Bacillati</taxon>
        <taxon>Bacillota</taxon>
        <taxon>Clostridia</taxon>
        <taxon>Eubacteriales</taxon>
        <taxon>Clostridiaceae</taxon>
        <taxon>Clostridium</taxon>
    </lineage>
</organism>
<protein>
    <recommendedName>
        <fullName evidence="1">Probable nicotinate-nucleotide adenylyltransferase</fullName>
        <ecNumber evidence="1">2.7.7.18</ecNumber>
    </recommendedName>
    <alternativeName>
        <fullName evidence="1">Deamido-NAD(+) diphosphorylase</fullName>
    </alternativeName>
    <alternativeName>
        <fullName evidence="1">Deamido-NAD(+) pyrophosphorylase</fullName>
    </alternativeName>
    <alternativeName>
        <fullName evidence="1">Nicotinate mononucleotide adenylyltransferase</fullName>
        <shortName evidence="1">NaMN adenylyltransferase</shortName>
    </alternativeName>
</protein>
<comment type="function">
    <text evidence="1">Catalyzes the reversible adenylation of nicotinate mononucleotide (NaMN) to nicotinic acid adenine dinucleotide (NaAD).</text>
</comment>
<comment type="catalytic activity">
    <reaction evidence="1">
        <text>nicotinate beta-D-ribonucleotide + ATP + H(+) = deamido-NAD(+) + diphosphate</text>
        <dbReference type="Rhea" id="RHEA:22860"/>
        <dbReference type="ChEBI" id="CHEBI:15378"/>
        <dbReference type="ChEBI" id="CHEBI:30616"/>
        <dbReference type="ChEBI" id="CHEBI:33019"/>
        <dbReference type="ChEBI" id="CHEBI:57502"/>
        <dbReference type="ChEBI" id="CHEBI:58437"/>
        <dbReference type="EC" id="2.7.7.18"/>
    </reaction>
</comment>
<comment type="pathway">
    <text evidence="1">Cofactor biosynthesis; NAD(+) biosynthesis; deamido-NAD(+) from nicotinate D-ribonucleotide: step 1/1.</text>
</comment>
<comment type="similarity">
    <text evidence="1">Belongs to the NadD family.</text>
</comment>